<sequence length="500" mass="54100">MPSLSSLCPDIVLIGAGIMSSTLAALLRELDPSLSMVMFETLSDCGQESSYAWNNAGTGHAGNCELNYTPQRADGSVDISKALAVNTEFDLSRQLWAHWVREGRIADPAAFVQPCPHISLVWGAENVAFLKARYEAMVAHHCFADMEYTDDPAVIAQWAPLAMAGRDTTQPVAATRIREGTDVNFGALTHALTASLKTDRSVSIHYNHRVTDLTRTEDGRWRVTATDTESGHAITVLTRFVFIGAGGNALPLLQKSGIPEATHYAGFPVSGLWLRCTDPAITRQHHAKVYGKAPVGSPPMSVPHLDTRVIDGKSCLLFGPYAGFSTKFLKSGSWTDYFRSLTPKNIIPALTAGKDNLGLLDYLVKQVIQTNEARFQALLDFYPTARPEDWSKVVAGQRVQIIRPDSGLHGKLRFGTELVKNADRSLVAVLGASPGASIAASVALQVVQGCFPERLVEGDWLPRLRQVFPAYGVDLTQDAAACATLRRDTAQVLGIASEAG</sequence>
<feature type="chain" id="PRO_1000023803" description="Probable malate:quinone oxidoreductase">
    <location>
        <begin position="1"/>
        <end position="500"/>
    </location>
</feature>
<evidence type="ECO:0000255" key="1">
    <source>
        <dbReference type="HAMAP-Rule" id="MF_00212"/>
    </source>
</evidence>
<gene>
    <name evidence="1" type="primary">mqo</name>
    <name type="ordered locus">GOX2070</name>
</gene>
<accession>Q5FP90</accession>
<proteinExistence type="inferred from homology"/>
<protein>
    <recommendedName>
        <fullName evidence="1">Probable malate:quinone oxidoreductase</fullName>
        <ecNumber evidence="1">1.1.5.4</ecNumber>
    </recommendedName>
    <alternativeName>
        <fullName evidence="1">MQO</fullName>
    </alternativeName>
    <alternativeName>
        <fullName evidence="1">Malate dehydrogenase [quinone]</fullName>
    </alternativeName>
</protein>
<organism>
    <name type="scientific">Gluconobacter oxydans (strain 621H)</name>
    <name type="common">Gluconobacter suboxydans</name>
    <dbReference type="NCBI Taxonomy" id="290633"/>
    <lineage>
        <taxon>Bacteria</taxon>
        <taxon>Pseudomonadati</taxon>
        <taxon>Pseudomonadota</taxon>
        <taxon>Alphaproteobacteria</taxon>
        <taxon>Acetobacterales</taxon>
        <taxon>Acetobacteraceae</taxon>
        <taxon>Gluconobacter</taxon>
    </lineage>
</organism>
<dbReference type="EC" id="1.1.5.4" evidence="1"/>
<dbReference type="EMBL" id="CP000009">
    <property type="protein sequence ID" value="AAW61806.1"/>
    <property type="molecule type" value="Genomic_DNA"/>
</dbReference>
<dbReference type="RefSeq" id="WP_011253583.1">
    <property type="nucleotide sequence ID" value="NC_006677.1"/>
</dbReference>
<dbReference type="SMR" id="Q5FP90"/>
<dbReference type="STRING" id="290633.GOX2070"/>
<dbReference type="KEGG" id="gox:GOX2070"/>
<dbReference type="eggNOG" id="COG0579">
    <property type="taxonomic scope" value="Bacteria"/>
</dbReference>
<dbReference type="HOGENOM" id="CLU_028151_0_0_5"/>
<dbReference type="UniPathway" id="UPA00223">
    <property type="reaction ID" value="UER01008"/>
</dbReference>
<dbReference type="Proteomes" id="UP000006375">
    <property type="component" value="Chromosome"/>
</dbReference>
<dbReference type="GO" id="GO:0047545">
    <property type="term" value="F:2-hydroxyglutarate dehydrogenase activity"/>
    <property type="evidence" value="ECO:0007669"/>
    <property type="project" value="TreeGrafter"/>
</dbReference>
<dbReference type="GO" id="GO:0008924">
    <property type="term" value="F:L-malate dehydrogenase (quinone) activity"/>
    <property type="evidence" value="ECO:0007669"/>
    <property type="project" value="UniProtKB-UniRule"/>
</dbReference>
<dbReference type="GO" id="GO:0006099">
    <property type="term" value="P:tricarboxylic acid cycle"/>
    <property type="evidence" value="ECO:0007669"/>
    <property type="project" value="UniProtKB-UniRule"/>
</dbReference>
<dbReference type="Gene3D" id="3.30.9.10">
    <property type="entry name" value="D-Amino Acid Oxidase, subunit A, domain 2"/>
    <property type="match status" value="1"/>
</dbReference>
<dbReference type="Gene3D" id="3.50.50.60">
    <property type="entry name" value="FAD/NAD(P)-binding domain"/>
    <property type="match status" value="1"/>
</dbReference>
<dbReference type="HAMAP" id="MF_00212">
    <property type="entry name" value="MQO"/>
    <property type="match status" value="1"/>
</dbReference>
<dbReference type="InterPro" id="IPR036188">
    <property type="entry name" value="FAD/NAD-bd_sf"/>
</dbReference>
<dbReference type="InterPro" id="IPR006231">
    <property type="entry name" value="MQO"/>
</dbReference>
<dbReference type="NCBIfam" id="TIGR01320">
    <property type="entry name" value="mal_quin_oxido"/>
    <property type="match status" value="1"/>
</dbReference>
<dbReference type="NCBIfam" id="NF003603">
    <property type="entry name" value="PRK05257.1-1"/>
    <property type="match status" value="1"/>
</dbReference>
<dbReference type="NCBIfam" id="NF003605">
    <property type="entry name" value="PRK05257.1-4"/>
    <property type="match status" value="1"/>
</dbReference>
<dbReference type="NCBIfam" id="NF003606">
    <property type="entry name" value="PRK05257.2-1"/>
    <property type="match status" value="1"/>
</dbReference>
<dbReference type="NCBIfam" id="NF003608">
    <property type="entry name" value="PRK05257.2-4"/>
    <property type="match status" value="1"/>
</dbReference>
<dbReference type="NCBIfam" id="NF003611">
    <property type="entry name" value="PRK05257.3-2"/>
    <property type="match status" value="1"/>
</dbReference>
<dbReference type="NCBIfam" id="NF009875">
    <property type="entry name" value="PRK13339.1"/>
    <property type="match status" value="1"/>
</dbReference>
<dbReference type="PANTHER" id="PTHR43104">
    <property type="entry name" value="L-2-HYDROXYGLUTARATE DEHYDROGENASE, MITOCHONDRIAL"/>
    <property type="match status" value="1"/>
</dbReference>
<dbReference type="PANTHER" id="PTHR43104:SF2">
    <property type="entry name" value="L-2-HYDROXYGLUTARATE DEHYDROGENASE, MITOCHONDRIAL"/>
    <property type="match status" value="1"/>
</dbReference>
<dbReference type="Pfam" id="PF06039">
    <property type="entry name" value="Mqo"/>
    <property type="match status" value="1"/>
</dbReference>
<dbReference type="SUPFAM" id="SSF51905">
    <property type="entry name" value="FAD/NAD(P)-binding domain"/>
    <property type="match status" value="1"/>
</dbReference>
<keyword id="KW-0274">FAD</keyword>
<keyword id="KW-0285">Flavoprotein</keyword>
<keyword id="KW-0560">Oxidoreductase</keyword>
<keyword id="KW-1185">Reference proteome</keyword>
<keyword id="KW-0816">Tricarboxylic acid cycle</keyword>
<comment type="catalytic activity">
    <reaction evidence="1">
        <text>(S)-malate + a quinone = a quinol + oxaloacetate</text>
        <dbReference type="Rhea" id="RHEA:46012"/>
        <dbReference type="ChEBI" id="CHEBI:15589"/>
        <dbReference type="ChEBI" id="CHEBI:16452"/>
        <dbReference type="ChEBI" id="CHEBI:24646"/>
        <dbReference type="ChEBI" id="CHEBI:132124"/>
        <dbReference type="EC" id="1.1.5.4"/>
    </reaction>
</comment>
<comment type="cofactor">
    <cofactor evidence="1">
        <name>FAD</name>
        <dbReference type="ChEBI" id="CHEBI:57692"/>
    </cofactor>
</comment>
<comment type="pathway">
    <text evidence="1">Carbohydrate metabolism; tricarboxylic acid cycle; oxaloacetate from (S)-malate (quinone route): step 1/1.</text>
</comment>
<comment type="similarity">
    <text evidence="1">Belongs to the MQO family.</text>
</comment>
<reference key="1">
    <citation type="journal article" date="2005" name="Nat. Biotechnol.">
        <title>Complete genome sequence of the acetic acid bacterium Gluconobacter oxydans.</title>
        <authorList>
            <person name="Prust C."/>
            <person name="Hoffmeister M."/>
            <person name="Liesegang H."/>
            <person name="Wiezer A."/>
            <person name="Fricke W.F."/>
            <person name="Ehrenreich A."/>
            <person name="Gottschalk G."/>
            <person name="Deppenmeier U."/>
        </authorList>
    </citation>
    <scope>NUCLEOTIDE SEQUENCE [LARGE SCALE GENOMIC DNA]</scope>
    <source>
        <strain>621H</strain>
    </source>
</reference>
<name>MQO_GLUOX</name>